<accession>Q0I4D8</accession>
<proteinExistence type="inferred from homology"/>
<name>GPMA_HISS1</name>
<dbReference type="EC" id="5.4.2.11" evidence="1"/>
<dbReference type="EMBL" id="CP000436">
    <property type="protein sequence ID" value="ABI25720.1"/>
    <property type="molecule type" value="Genomic_DNA"/>
</dbReference>
<dbReference type="SMR" id="Q0I4D8"/>
<dbReference type="KEGG" id="hso:HS_1445"/>
<dbReference type="eggNOG" id="COG0588">
    <property type="taxonomic scope" value="Bacteria"/>
</dbReference>
<dbReference type="HOGENOM" id="CLU_033323_1_5_6"/>
<dbReference type="UniPathway" id="UPA00109">
    <property type="reaction ID" value="UER00186"/>
</dbReference>
<dbReference type="GO" id="GO:0004619">
    <property type="term" value="F:phosphoglycerate mutase activity"/>
    <property type="evidence" value="ECO:0007669"/>
    <property type="project" value="UniProtKB-EC"/>
</dbReference>
<dbReference type="GO" id="GO:0006094">
    <property type="term" value="P:gluconeogenesis"/>
    <property type="evidence" value="ECO:0007669"/>
    <property type="project" value="UniProtKB-UniRule"/>
</dbReference>
<dbReference type="GO" id="GO:0006096">
    <property type="term" value="P:glycolytic process"/>
    <property type="evidence" value="ECO:0007669"/>
    <property type="project" value="UniProtKB-UniRule"/>
</dbReference>
<dbReference type="CDD" id="cd07067">
    <property type="entry name" value="HP_PGM_like"/>
    <property type="match status" value="1"/>
</dbReference>
<dbReference type="FunFam" id="3.40.50.1240:FF:000003">
    <property type="entry name" value="2,3-bisphosphoglycerate-dependent phosphoglycerate mutase"/>
    <property type="match status" value="1"/>
</dbReference>
<dbReference type="Gene3D" id="3.40.50.1240">
    <property type="entry name" value="Phosphoglycerate mutase-like"/>
    <property type="match status" value="1"/>
</dbReference>
<dbReference type="HAMAP" id="MF_01039">
    <property type="entry name" value="PGAM_GpmA"/>
    <property type="match status" value="1"/>
</dbReference>
<dbReference type="InterPro" id="IPR013078">
    <property type="entry name" value="His_Pase_superF_clade-1"/>
</dbReference>
<dbReference type="InterPro" id="IPR029033">
    <property type="entry name" value="His_PPase_superfam"/>
</dbReference>
<dbReference type="InterPro" id="IPR005952">
    <property type="entry name" value="Phosphogly_mut1"/>
</dbReference>
<dbReference type="NCBIfam" id="TIGR01258">
    <property type="entry name" value="pgm_1"/>
    <property type="match status" value="1"/>
</dbReference>
<dbReference type="NCBIfam" id="NF010713">
    <property type="entry name" value="PRK14115.1"/>
    <property type="match status" value="1"/>
</dbReference>
<dbReference type="NCBIfam" id="NF010716">
    <property type="entry name" value="PRK14118.1"/>
    <property type="match status" value="1"/>
</dbReference>
<dbReference type="PANTHER" id="PTHR11931">
    <property type="entry name" value="PHOSPHOGLYCERATE MUTASE"/>
    <property type="match status" value="1"/>
</dbReference>
<dbReference type="Pfam" id="PF00300">
    <property type="entry name" value="His_Phos_1"/>
    <property type="match status" value="2"/>
</dbReference>
<dbReference type="PIRSF" id="PIRSF000709">
    <property type="entry name" value="6PFK_2-Ptase"/>
    <property type="match status" value="1"/>
</dbReference>
<dbReference type="SMART" id="SM00855">
    <property type="entry name" value="PGAM"/>
    <property type="match status" value="1"/>
</dbReference>
<dbReference type="SUPFAM" id="SSF53254">
    <property type="entry name" value="Phosphoglycerate mutase-like"/>
    <property type="match status" value="1"/>
</dbReference>
<keyword id="KW-0312">Gluconeogenesis</keyword>
<keyword id="KW-0324">Glycolysis</keyword>
<keyword id="KW-0413">Isomerase</keyword>
<evidence type="ECO:0000255" key="1">
    <source>
        <dbReference type="HAMAP-Rule" id="MF_01039"/>
    </source>
</evidence>
<reference key="1">
    <citation type="journal article" date="2007" name="J. Bacteriol.">
        <title>Complete genome sequence of Haemophilus somnus (Histophilus somni) strain 129Pt and comparison to Haemophilus ducreyi 35000HP and Haemophilus influenzae Rd.</title>
        <authorList>
            <person name="Challacombe J.F."/>
            <person name="Duncan A.J."/>
            <person name="Brettin T.S."/>
            <person name="Bruce D."/>
            <person name="Chertkov O."/>
            <person name="Detter J.C."/>
            <person name="Han C.S."/>
            <person name="Misra M."/>
            <person name="Richardson P."/>
            <person name="Tapia R."/>
            <person name="Thayer N."/>
            <person name="Xie G."/>
            <person name="Inzana T.J."/>
        </authorList>
    </citation>
    <scope>NUCLEOTIDE SEQUENCE [LARGE SCALE GENOMIC DNA]</scope>
    <source>
        <strain>129Pt</strain>
    </source>
</reference>
<comment type="function">
    <text evidence="1">Catalyzes the interconversion of 2-phosphoglycerate and 3-phosphoglycerate.</text>
</comment>
<comment type="catalytic activity">
    <reaction evidence="1">
        <text>(2R)-2-phosphoglycerate = (2R)-3-phosphoglycerate</text>
        <dbReference type="Rhea" id="RHEA:15901"/>
        <dbReference type="ChEBI" id="CHEBI:58272"/>
        <dbReference type="ChEBI" id="CHEBI:58289"/>
        <dbReference type="EC" id="5.4.2.11"/>
    </reaction>
</comment>
<comment type="pathway">
    <text evidence="1">Carbohydrate degradation; glycolysis; pyruvate from D-glyceraldehyde 3-phosphate: step 3/5.</text>
</comment>
<comment type="subunit">
    <text evidence="1">Homodimer.</text>
</comment>
<comment type="similarity">
    <text evidence="1">Belongs to the phosphoglycerate mutase family. BPG-dependent PGAM subfamily.</text>
</comment>
<sequence length="227" mass="26015">MELVFIRHGFSEWNAKNLFTGWRDVNLTERGIEEAKAAGKKLLEAGYEFDIAFTSVLTRAIKTCNIVLEESNQLWIPQVKHWRLNERHYGALQGLDKKATAEQYGDEQVHIWRRSYDVSPPDLDPQDPNSAHNDRRYALLPKDVVPNAENLKITLERVLPFWEDQIAPALLSGKRVLVTAHGNSLRALAKHIIGISDEEIMAFEIPTGQPLVLKLDEQLNFVEKFYL</sequence>
<protein>
    <recommendedName>
        <fullName evidence="1">2,3-bisphosphoglycerate-dependent phosphoglycerate mutase</fullName>
        <shortName evidence="1">BPG-dependent PGAM</shortName>
        <shortName evidence="1">PGAM</shortName>
        <shortName evidence="1">Phosphoglyceromutase</shortName>
        <shortName evidence="1">dPGM</shortName>
        <ecNumber evidence="1">5.4.2.11</ecNumber>
    </recommendedName>
</protein>
<organism>
    <name type="scientific">Histophilus somni (strain 129Pt)</name>
    <name type="common">Haemophilus somnus</name>
    <dbReference type="NCBI Taxonomy" id="205914"/>
    <lineage>
        <taxon>Bacteria</taxon>
        <taxon>Pseudomonadati</taxon>
        <taxon>Pseudomonadota</taxon>
        <taxon>Gammaproteobacteria</taxon>
        <taxon>Pasteurellales</taxon>
        <taxon>Pasteurellaceae</taxon>
        <taxon>Histophilus</taxon>
    </lineage>
</organism>
<gene>
    <name evidence="1" type="primary">gpmA</name>
    <name type="ordered locus">HS_1445</name>
</gene>
<feature type="chain" id="PRO_1000064064" description="2,3-bisphosphoglycerate-dependent phosphoglycerate mutase">
    <location>
        <begin position="1"/>
        <end position="227"/>
    </location>
</feature>
<feature type="active site" description="Tele-phosphohistidine intermediate" evidence="1">
    <location>
        <position position="8"/>
    </location>
</feature>
<feature type="active site" description="Proton donor/acceptor" evidence="1">
    <location>
        <position position="86"/>
    </location>
</feature>
<feature type="binding site" evidence="1">
    <location>
        <begin position="7"/>
        <end position="14"/>
    </location>
    <ligand>
        <name>substrate</name>
    </ligand>
</feature>
<feature type="binding site" evidence="1">
    <location>
        <begin position="20"/>
        <end position="21"/>
    </location>
    <ligand>
        <name>substrate</name>
    </ligand>
</feature>
<feature type="binding site" evidence="1">
    <location>
        <position position="59"/>
    </location>
    <ligand>
        <name>substrate</name>
    </ligand>
</feature>
<feature type="binding site" evidence="1">
    <location>
        <begin position="86"/>
        <end position="89"/>
    </location>
    <ligand>
        <name>substrate</name>
    </ligand>
</feature>
<feature type="binding site" evidence="1">
    <location>
        <position position="97"/>
    </location>
    <ligand>
        <name>substrate</name>
    </ligand>
</feature>
<feature type="binding site" evidence="1">
    <location>
        <begin position="113"/>
        <end position="114"/>
    </location>
    <ligand>
        <name>substrate</name>
    </ligand>
</feature>
<feature type="binding site" evidence="1">
    <location>
        <begin position="182"/>
        <end position="183"/>
    </location>
    <ligand>
        <name>substrate</name>
    </ligand>
</feature>
<feature type="site" description="Transition state stabilizer" evidence="1">
    <location>
        <position position="181"/>
    </location>
</feature>